<feature type="chain" id="PRO_0000195485" description="ATP synthase protein 8">
    <location>
        <begin position="1"/>
        <end position="53"/>
    </location>
</feature>
<feature type="transmembrane region" description="Helical" evidence="2">
    <location>
        <begin position="9"/>
        <end position="29"/>
    </location>
</feature>
<geneLocation type="mitochondrion"/>
<reference key="1">
    <citation type="journal article" date="1990" name="Arch. Insect Biochem. Physiol.">
        <title>Cloning of the mitochondrial genome of Anopheles quadrimaculatus.</title>
        <authorList>
            <person name="Cockburn A.F."/>
            <person name="Mitchell S.E."/>
            <person name="Seawright J.A."/>
        </authorList>
    </citation>
    <scope>NUCLEOTIDE SEQUENCE [GENOMIC DNA]</scope>
    <source>
        <strain>Orlando</strain>
    </source>
</reference>
<gene>
    <name type="primary">mt:ATPase8</name>
    <name type="synonym">ATP8</name>
    <name type="synonym">ATPASE8</name>
    <name type="synonym">MT-ATP8</name>
    <name type="synonym">MTATP8</name>
</gene>
<organism>
    <name type="scientific">Anopheles quadrimaculatus</name>
    <name type="common">Common malaria mosquito</name>
    <dbReference type="NCBI Taxonomy" id="7166"/>
    <lineage>
        <taxon>Eukaryota</taxon>
        <taxon>Metazoa</taxon>
        <taxon>Ecdysozoa</taxon>
        <taxon>Arthropoda</taxon>
        <taxon>Hexapoda</taxon>
        <taxon>Insecta</taxon>
        <taxon>Pterygota</taxon>
        <taxon>Neoptera</taxon>
        <taxon>Endopterygota</taxon>
        <taxon>Diptera</taxon>
        <taxon>Nematocera</taxon>
        <taxon>Culicoidea</taxon>
        <taxon>Culicidae</taxon>
        <taxon>Anophelinae</taxon>
        <taxon>Anopheles</taxon>
    </lineage>
</organism>
<keyword id="KW-0066">ATP synthesis</keyword>
<keyword id="KW-0138">CF(0)</keyword>
<keyword id="KW-0375">Hydrogen ion transport</keyword>
<keyword id="KW-0406">Ion transport</keyword>
<keyword id="KW-0472">Membrane</keyword>
<keyword id="KW-0496">Mitochondrion</keyword>
<keyword id="KW-0812">Transmembrane</keyword>
<keyword id="KW-1133">Transmembrane helix</keyword>
<keyword id="KW-0813">Transport</keyword>
<sequence length="53" mass="6468">MPQMAPINWLILFFIFSITLVIFNILNYFCFSYTPMKTSQSLNIKFNKLNWKW</sequence>
<protein>
    <recommendedName>
        <fullName>ATP synthase protein 8</fullName>
    </recommendedName>
    <alternativeName>
        <fullName>A6L</fullName>
    </alternativeName>
    <alternativeName>
        <fullName>F-ATPase subunit 8</fullName>
    </alternativeName>
</protein>
<name>ATP8_ANOQU</name>
<evidence type="ECO:0000250" key="1"/>
<evidence type="ECO:0000255" key="2"/>
<evidence type="ECO:0000305" key="3"/>
<accession>P33506</accession>
<comment type="function">
    <text evidence="1">Mitochondrial membrane ATP synthase (F(1)F(0) ATP synthase or Complex V) produces ATP from ADP in the presence of a proton gradient across the membrane which is generated by electron transport complexes of the respiratory chain. F-type ATPases consist of two structural domains, F(1) - containing the extramembraneous catalytic core and F(0) - containing the membrane proton channel, linked together by a central stalk and a peripheral stalk. During catalysis, ATP synthesis in the catalytic domain of F(1) is coupled via a rotary mechanism of the central stalk subunits to proton translocation. Part of the complex F(0) domain. Minor subunit located with subunit a in the membrane (By similarity).</text>
</comment>
<comment type="subunit">
    <text evidence="1">F-type ATPases have 2 components, CF(1) - the catalytic core - and CF(0) - the membrane proton channel.</text>
</comment>
<comment type="subcellular location">
    <subcellularLocation>
        <location>Mitochondrion membrane</location>
        <topology>Single-pass membrane protein</topology>
    </subcellularLocation>
</comment>
<comment type="similarity">
    <text evidence="3">Belongs to the ATPase protein 8 family.</text>
</comment>
<proteinExistence type="inferred from homology"/>
<dbReference type="EMBL" id="L04272">
    <property type="protein sequence ID" value="AAA93543.1"/>
    <property type="molecule type" value="Genomic_DNA"/>
</dbReference>
<dbReference type="SMR" id="P33506"/>
<dbReference type="GO" id="GO:0031966">
    <property type="term" value="C:mitochondrial membrane"/>
    <property type="evidence" value="ECO:0007669"/>
    <property type="project" value="UniProtKB-SubCell"/>
</dbReference>
<dbReference type="GO" id="GO:0045259">
    <property type="term" value="C:proton-transporting ATP synthase complex"/>
    <property type="evidence" value="ECO:0007669"/>
    <property type="project" value="UniProtKB-KW"/>
</dbReference>
<dbReference type="GO" id="GO:0015078">
    <property type="term" value="F:proton transmembrane transporter activity"/>
    <property type="evidence" value="ECO:0007669"/>
    <property type="project" value="InterPro"/>
</dbReference>
<dbReference type="GO" id="GO:0015986">
    <property type="term" value="P:proton motive force-driven ATP synthesis"/>
    <property type="evidence" value="ECO:0007669"/>
    <property type="project" value="InterPro"/>
</dbReference>
<dbReference type="InterPro" id="IPR001421">
    <property type="entry name" value="ATP8_metazoa"/>
</dbReference>
<dbReference type="Pfam" id="PF00895">
    <property type="entry name" value="ATP-synt_8"/>
    <property type="match status" value="1"/>
</dbReference>